<organism>
    <name type="scientific">Saguinus imperator</name>
    <name type="common">Emperor tamarin</name>
    <dbReference type="NCBI Taxonomy" id="9491"/>
    <lineage>
        <taxon>Eukaryota</taxon>
        <taxon>Metazoa</taxon>
        <taxon>Chordata</taxon>
        <taxon>Craniata</taxon>
        <taxon>Vertebrata</taxon>
        <taxon>Euteleostomi</taxon>
        <taxon>Mammalia</taxon>
        <taxon>Eutheria</taxon>
        <taxon>Euarchontoglires</taxon>
        <taxon>Primates</taxon>
        <taxon>Haplorrhini</taxon>
        <taxon>Platyrrhini</taxon>
        <taxon>Cebidae</taxon>
        <taxon>Callitrichinae</taxon>
        <taxon>Saguinus</taxon>
    </lineage>
</organism>
<reference key="1">
    <citation type="journal article" date="2003" name="Am. J. Phys. Anthropol.">
        <title>Evolution of a pigmentation gene, the melanocortin-1 receptor, in primates.</title>
        <authorList>
            <person name="Mundy N.I."/>
            <person name="Kelly J."/>
        </authorList>
    </citation>
    <scope>NUCLEOTIDE SEQUENCE [GENOMIC DNA]</scope>
    <source>
        <strain>Isolate 1</strain>
    </source>
</reference>
<evidence type="ECO:0000250" key="1">
    <source>
        <dbReference type="UniProtKB" id="Q01726"/>
    </source>
</evidence>
<evidence type="ECO:0000255" key="2"/>
<evidence type="ECO:0000255" key="3">
    <source>
        <dbReference type="PROSITE-ProRule" id="PRU00521"/>
    </source>
</evidence>
<comment type="function">
    <text evidence="1">Receptor for MSH (alpha, beta and gamma) and ACTH. The activity of this receptor is mediated by G proteins which activate adenylate cyclase. Mediates melanogenesis, the production of eumelanin (black/brown) and phaeomelanin (red/yellow), via regulation of cAMP signaling in melanocytes.</text>
</comment>
<comment type="subunit">
    <text evidence="1">Interacts with MGRN1, but does not undergo MGRN1-mediated ubiquitination; this interaction competes with GNAS-binding and thus inhibits agonist-induced cAMP production. Interacts with OPN3; the interaction results in a decrease in MC1R-mediated cAMP signaling and ultimately a decrease in melanin production in melanocytes.</text>
</comment>
<comment type="subcellular location">
    <subcellularLocation>
        <location evidence="1">Cell membrane</location>
        <topology evidence="2">Multi-pass membrane protein</topology>
    </subcellularLocation>
</comment>
<comment type="similarity">
    <text evidence="3">Belongs to the G-protein coupled receptor 1 family.</text>
</comment>
<sequence length="317" mass="34848">MPMQGAQRKLLGSLNSTPTATSNLGLAANHTGAPCLEVSIPDGLFLSLGLVSLVENVLVVAAIAKNRNLHSSMYCFICCLALSDLLVSGSNMLETAVILLLEAGALATRTSAVQRLHNTIDVLTCSSMLCSLCFLGAIAVDRYISIFYALRYHSIVTLPRTQRVIAAIWVASVLSSTLFITYYDHAAVLLCLVVFFLAMLVLMAVLYVHMLARACQHAHGIIRLHKRQSPAHQGFGLRGAATLTILLGIFFLCWGPFFLHLTLVVFCPQHLTCSCIFKNFKVFLTLIICNTIIDPLIYAFRSQELRRTLKEVLLCSW</sequence>
<dbReference type="EMBL" id="AY205122">
    <property type="protein sequence ID" value="AAP30996.1"/>
    <property type="molecule type" value="Genomic_DNA"/>
</dbReference>
<dbReference type="SMR" id="Q864H5"/>
<dbReference type="GlyCosmos" id="Q864H5">
    <property type="glycosylation" value="1 site, No reported glycans"/>
</dbReference>
<dbReference type="GO" id="GO:0005886">
    <property type="term" value="C:plasma membrane"/>
    <property type="evidence" value="ECO:0000250"/>
    <property type="project" value="UniProtKB"/>
</dbReference>
<dbReference type="GO" id="GO:0004980">
    <property type="term" value="F:melanocyte-stimulating hormone receptor activity"/>
    <property type="evidence" value="ECO:0007669"/>
    <property type="project" value="InterPro"/>
</dbReference>
<dbReference type="GO" id="GO:0007189">
    <property type="term" value="P:adenylate cyclase-activating G protein-coupled receptor signaling pathway"/>
    <property type="evidence" value="ECO:0007669"/>
    <property type="project" value="UniProtKB-ARBA"/>
</dbReference>
<dbReference type="FunFam" id="1.20.1070.10:FF:000211">
    <property type="entry name" value="Melanocyte-stimulating hormone receptor"/>
    <property type="match status" value="1"/>
</dbReference>
<dbReference type="Gene3D" id="1.20.1070.10">
    <property type="entry name" value="Rhodopsin 7-helix transmembrane proteins"/>
    <property type="match status" value="1"/>
</dbReference>
<dbReference type="InterPro" id="IPR000276">
    <property type="entry name" value="GPCR_Rhodpsn"/>
</dbReference>
<dbReference type="InterPro" id="IPR017452">
    <property type="entry name" value="GPCR_Rhodpsn_7TM"/>
</dbReference>
<dbReference type="InterPro" id="IPR001671">
    <property type="entry name" value="Melcrt_ACTH_rcpt"/>
</dbReference>
<dbReference type="InterPro" id="IPR000761">
    <property type="entry name" value="MSH_rcpt"/>
</dbReference>
<dbReference type="PANTHER" id="PTHR22750">
    <property type="entry name" value="G-PROTEIN COUPLED RECEPTOR"/>
    <property type="match status" value="1"/>
</dbReference>
<dbReference type="Pfam" id="PF00001">
    <property type="entry name" value="7tm_1"/>
    <property type="match status" value="2"/>
</dbReference>
<dbReference type="PRINTS" id="PR00237">
    <property type="entry name" value="GPCRRHODOPSN"/>
</dbReference>
<dbReference type="PRINTS" id="PR00534">
    <property type="entry name" value="MCRFAMILY"/>
</dbReference>
<dbReference type="PRINTS" id="PR00536">
    <property type="entry name" value="MELNOCYTESHR"/>
</dbReference>
<dbReference type="SMART" id="SM01381">
    <property type="entry name" value="7TM_GPCR_Srsx"/>
    <property type="match status" value="1"/>
</dbReference>
<dbReference type="SUPFAM" id="SSF81321">
    <property type="entry name" value="Family A G protein-coupled receptor-like"/>
    <property type="match status" value="1"/>
</dbReference>
<dbReference type="PROSITE" id="PS00237">
    <property type="entry name" value="G_PROTEIN_RECEP_F1_1"/>
    <property type="match status" value="1"/>
</dbReference>
<dbReference type="PROSITE" id="PS50262">
    <property type="entry name" value="G_PROTEIN_RECEP_F1_2"/>
    <property type="match status" value="1"/>
</dbReference>
<name>MSHR_SAGIM</name>
<feature type="chain" id="PRO_0000069846" description="Melanocyte-stimulating hormone receptor">
    <location>
        <begin position="1"/>
        <end position="317"/>
    </location>
</feature>
<feature type="topological domain" description="Extracellular" evidence="2">
    <location>
        <begin position="1"/>
        <end position="37"/>
    </location>
</feature>
<feature type="transmembrane region" description="Helical; Name=1" evidence="2">
    <location>
        <begin position="38"/>
        <end position="63"/>
    </location>
</feature>
<feature type="topological domain" description="Cytoplasmic" evidence="2">
    <location>
        <begin position="64"/>
        <end position="72"/>
    </location>
</feature>
<feature type="transmembrane region" description="Helical; Name=2" evidence="2">
    <location>
        <begin position="73"/>
        <end position="93"/>
    </location>
</feature>
<feature type="topological domain" description="Extracellular" evidence="2">
    <location>
        <begin position="94"/>
        <end position="118"/>
    </location>
</feature>
<feature type="transmembrane region" description="Helical; Name=3" evidence="2">
    <location>
        <begin position="119"/>
        <end position="140"/>
    </location>
</feature>
<feature type="topological domain" description="Cytoplasmic" evidence="2">
    <location>
        <begin position="141"/>
        <end position="163"/>
    </location>
</feature>
<feature type="transmembrane region" description="Helical; Name=4" evidence="2">
    <location>
        <begin position="164"/>
        <end position="183"/>
    </location>
</feature>
<feature type="topological domain" description="Extracellular" evidence="2">
    <location>
        <begin position="184"/>
        <end position="191"/>
    </location>
</feature>
<feature type="transmembrane region" description="Helical; Name=5" evidence="2">
    <location>
        <begin position="192"/>
        <end position="211"/>
    </location>
</feature>
<feature type="topological domain" description="Cytoplasmic" evidence="2">
    <location>
        <begin position="212"/>
        <end position="240"/>
    </location>
</feature>
<feature type="transmembrane region" description="Helical; Name=6" evidence="2">
    <location>
        <begin position="241"/>
        <end position="266"/>
    </location>
</feature>
<feature type="topological domain" description="Extracellular" evidence="2">
    <location>
        <begin position="267"/>
        <end position="279"/>
    </location>
</feature>
<feature type="transmembrane region" description="Helical; Name=7" evidence="2">
    <location>
        <begin position="280"/>
        <end position="300"/>
    </location>
</feature>
<feature type="topological domain" description="Cytoplasmic" evidence="2">
    <location>
        <begin position="301"/>
        <end position="317"/>
    </location>
</feature>
<feature type="lipid moiety-binding region" description="S-palmitoyl cysteine" evidence="2">
    <location>
        <position position="315"/>
    </location>
</feature>
<feature type="glycosylation site" description="N-linked (GlcNAc...) asparagine" evidence="2">
    <location>
        <position position="29"/>
    </location>
</feature>
<gene>
    <name type="primary">MC1R</name>
</gene>
<keyword id="KW-1003">Cell membrane</keyword>
<keyword id="KW-0297">G-protein coupled receptor</keyword>
<keyword id="KW-0325">Glycoprotein</keyword>
<keyword id="KW-0449">Lipoprotein</keyword>
<keyword id="KW-0472">Membrane</keyword>
<keyword id="KW-0564">Palmitate</keyword>
<keyword id="KW-0675">Receptor</keyword>
<keyword id="KW-0807">Transducer</keyword>
<keyword id="KW-0812">Transmembrane</keyword>
<keyword id="KW-1133">Transmembrane helix</keyword>
<accession>Q864H5</accession>
<proteinExistence type="inferred from homology"/>
<protein>
    <recommendedName>
        <fullName>Melanocyte-stimulating hormone receptor</fullName>
        <shortName>MSH-R</shortName>
    </recommendedName>
    <alternativeName>
        <fullName>Melanocortin receptor 1</fullName>
        <shortName>MC1-R</shortName>
    </alternativeName>
</protein>